<feature type="chain" id="PRO_1000061526" description="Putative pre-16S rRNA nuclease">
    <location>
        <begin position="1"/>
        <end position="145"/>
    </location>
</feature>
<evidence type="ECO:0000255" key="1">
    <source>
        <dbReference type="HAMAP-Rule" id="MF_00651"/>
    </source>
</evidence>
<keyword id="KW-0963">Cytoplasm</keyword>
<keyword id="KW-0378">Hydrolase</keyword>
<keyword id="KW-0540">Nuclease</keyword>
<keyword id="KW-1185">Reference proteome</keyword>
<keyword id="KW-0690">Ribosome biogenesis</keyword>
<sequence length="145" mass="16197">MKLMGLDVGSRTVGVAVSDALGWTAQGVEIIRINEDEEQFGLDRVGELIASHDVQGFVVGLPKNMNNSLGPRAEASKRYGDMLTARFNLPVDFEDERLTTVEAERMLVEQADTSRRKRKQVIDKLAAGLILQNYLDRHGKLTREK</sequence>
<organism>
    <name type="scientific">Levilactobacillus brevis (strain ATCC 367 / BCRC 12310 / CIP 105137 / JCM 1170 / LMG 11437 / NCIMB 947 / NCTC 947)</name>
    <name type="common">Lactobacillus brevis</name>
    <dbReference type="NCBI Taxonomy" id="387344"/>
    <lineage>
        <taxon>Bacteria</taxon>
        <taxon>Bacillati</taxon>
        <taxon>Bacillota</taxon>
        <taxon>Bacilli</taxon>
        <taxon>Lactobacillales</taxon>
        <taxon>Lactobacillaceae</taxon>
        <taxon>Levilactobacillus</taxon>
    </lineage>
</organism>
<comment type="function">
    <text evidence="1">Could be a nuclease involved in processing of the 5'-end of pre-16S rRNA.</text>
</comment>
<comment type="subcellular location">
    <subcellularLocation>
        <location evidence="1">Cytoplasm</location>
    </subcellularLocation>
</comment>
<comment type="similarity">
    <text evidence="1">Belongs to the YqgF nuclease family.</text>
</comment>
<reference key="1">
    <citation type="journal article" date="2006" name="Proc. Natl. Acad. Sci. U.S.A.">
        <title>Comparative genomics of the lactic acid bacteria.</title>
        <authorList>
            <person name="Makarova K.S."/>
            <person name="Slesarev A."/>
            <person name="Wolf Y.I."/>
            <person name="Sorokin A."/>
            <person name="Mirkin B."/>
            <person name="Koonin E.V."/>
            <person name="Pavlov A."/>
            <person name="Pavlova N."/>
            <person name="Karamychev V."/>
            <person name="Polouchine N."/>
            <person name="Shakhova V."/>
            <person name="Grigoriev I."/>
            <person name="Lou Y."/>
            <person name="Rohksar D."/>
            <person name="Lucas S."/>
            <person name="Huang K."/>
            <person name="Goodstein D.M."/>
            <person name="Hawkins T."/>
            <person name="Plengvidhya V."/>
            <person name="Welker D."/>
            <person name="Hughes J."/>
            <person name="Goh Y."/>
            <person name="Benson A."/>
            <person name="Baldwin K."/>
            <person name="Lee J.-H."/>
            <person name="Diaz-Muniz I."/>
            <person name="Dosti B."/>
            <person name="Smeianov V."/>
            <person name="Wechter W."/>
            <person name="Barabote R."/>
            <person name="Lorca G."/>
            <person name="Altermann E."/>
            <person name="Barrangou R."/>
            <person name="Ganesan B."/>
            <person name="Xie Y."/>
            <person name="Rawsthorne H."/>
            <person name="Tamir D."/>
            <person name="Parker C."/>
            <person name="Breidt F."/>
            <person name="Broadbent J.R."/>
            <person name="Hutkins R."/>
            <person name="O'Sullivan D."/>
            <person name="Steele J."/>
            <person name="Unlu G."/>
            <person name="Saier M.H. Jr."/>
            <person name="Klaenhammer T."/>
            <person name="Richardson P."/>
            <person name="Kozyavkin S."/>
            <person name="Weimer B.C."/>
            <person name="Mills D.A."/>
        </authorList>
    </citation>
    <scope>NUCLEOTIDE SEQUENCE [LARGE SCALE GENOMIC DNA]</scope>
    <source>
        <strain>ATCC 367 / BCRC 12310 / CIP 105137 / JCM 1170 / LMG 11437 / NCIMB 947 / NCTC 947</strain>
    </source>
</reference>
<proteinExistence type="inferred from homology"/>
<dbReference type="EC" id="3.1.-.-" evidence="1"/>
<dbReference type="EMBL" id="CP000416">
    <property type="protein sequence ID" value="ABJ64327.1"/>
    <property type="molecule type" value="Genomic_DNA"/>
</dbReference>
<dbReference type="SMR" id="Q03R45"/>
<dbReference type="STRING" id="387344.LVIS_1221"/>
<dbReference type="KEGG" id="lbr:LVIS_1221"/>
<dbReference type="eggNOG" id="COG0816">
    <property type="taxonomic scope" value="Bacteria"/>
</dbReference>
<dbReference type="HOGENOM" id="CLU_098240_2_0_9"/>
<dbReference type="Proteomes" id="UP000001652">
    <property type="component" value="Chromosome"/>
</dbReference>
<dbReference type="GO" id="GO:0005829">
    <property type="term" value="C:cytosol"/>
    <property type="evidence" value="ECO:0007669"/>
    <property type="project" value="TreeGrafter"/>
</dbReference>
<dbReference type="GO" id="GO:0004518">
    <property type="term" value="F:nuclease activity"/>
    <property type="evidence" value="ECO:0007669"/>
    <property type="project" value="UniProtKB-KW"/>
</dbReference>
<dbReference type="GO" id="GO:0000967">
    <property type="term" value="P:rRNA 5'-end processing"/>
    <property type="evidence" value="ECO:0007669"/>
    <property type="project" value="UniProtKB-UniRule"/>
</dbReference>
<dbReference type="CDD" id="cd16964">
    <property type="entry name" value="YqgF"/>
    <property type="match status" value="1"/>
</dbReference>
<dbReference type="Gene3D" id="3.30.420.140">
    <property type="entry name" value="YqgF/RNase H-like domain"/>
    <property type="match status" value="1"/>
</dbReference>
<dbReference type="HAMAP" id="MF_00651">
    <property type="entry name" value="Nuclease_YqgF"/>
    <property type="match status" value="1"/>
</dbReference>
<dbReference type="InterPro" id="IPR012337">
    <property type="entry name" value="RNaseH-like_sf"/>
</dbReference>
<dbReference type="InterPro" id="IPR005227">
    <property type="entry name" value="YqgF"/>
</dbReference>
<dbReference type="InterPro" id="IPR006641">
    <property type="entry name" value="YqgF/RNaseH-like_dom"/>
</dbReference>
<dbReference type="InterPro" id="IPR037027">
    <property type="entry name" value="YqgF/RNaseH-like_dom_sf"/>
</dbReference>
<dbReference type="NCBIfam" id="TIGR00250">
    <property type="entry name" value="RNAse_H_YqgF"/>
    <property type="match status" value="1"/>
</dbReference>
<dbReference type="PANTHER" id="PTHR33317">
    <property type="entry name" value="POLYNUCLEOTIDYL TRANSFERASE, RIBONUCLEASE H-LIKE SUPERFAMILY PROTEIN"/>
    <property type="match status" value="1"/>
</dbReference>
<dbReference type="PANTHER" id="PTHR33317:SF4">
    <property type="entry name" value="POLYNUCLEOTIDYL TRANSFERASE, RIBONUCLEASE H-LIKE SUPERFAMILY PROTEIN"/>
    <property type="match status" value="1"/>
</dbReference>
<dbReference type="Pfam" id="PF03652">
    <property type="entry name" value="RuvX"/>
    <property type="match status" value="1"/>
</dbReference>
<dbReference type="SMART" id="SM00732">
    <property type="entry name" value="YqgFc"/>
    <property type="match status" value="1"/>
</dbReference>
<dbReference type="SUPFAM" id="SSF53098">
    <property type="entry name" value="Ribonuclease H-like"/>
    <property type="match status" value="1"/>
</dbReference>
<accession>Q03R45</accession>
<protein>
    <recommendedName>
        <fullName evidence="1">Putative pre-16S rRNA nuclease</fullName>
        <ecNumber evidence="1">3.1.-.-</ecNumber>
    </recommendedName>
</protein>
<gene>
    <name type="ordered locus">LVIS_1221</name>
</gene>
<name>YQGF_LEVBA</name>